<name>EIF3I_BOTFB</name>
<protein>
    <recommendedName>
        <fullName evidence="1">Eukaryotic translation initiation factor 3 subunit I</fullName>
        <shortName evidence="1">eIF3i</shortName>
    </recommendedName>
    <alternativeName>
        <fullName evidence="1">Eukaryotic translation initiation factor 3 39 kDa subunit homolog</fullName>
        <shortName evidence="1">eIF-3 39 kDa subunit homolog</shortName>
    </alternativeName>
</protein>
<accession>A6RUL1</accession>
<accession>A0A384JEU4</accession>
<reference key="1">
    <citation type="journal article" date="2011" name="PLoS Genet.">
        <title>Genomic analysis of the necrotrophic fungal pathogens Sclerotinia sclerotiorum and Botrytis cinerea.</title>
        <authorList>
            <person name="Amselem J."/>
            <person name="Cuomo C.A."/>
            <person name="van Kan J.A.L."/>
            <person name="Viaud M."/>
            <person name="Benito E.P."/>
            <person name="Couloux A."/>
            <person name="Coutinho P.M."/>
            <person name="de Vries R.P."/>
            <person name="Dyer P.S."/>
            <person name="Fillinger S."/>
            <person name="Fournier E."/>
            <person name="Gout L."/>
            <person name="Hahn M."/>
            <person name="Kohn L."/>
            <person name="Lapalu N."/>
            <person name="Plummer K.M."/>
            <person name="Pradier J.-M."/>
            <person name="Quevillon E."/>
            <person name="Sharon A."/>
            <person name="Simon A."/>
            <person name="ten Have A."/>
            <person name="Tudzynski B."/>
            <person name="Tudzynski P."/>
            <person name="Wincker P."/>
            <person name="Andrew M."/>
            <person name="Anthouard V."/>
            <person name="Beever R.E."/>
            <person name="Beffa R."/>
            <person name="Benoit I."/>
            <person name="Bouzid O."/>
            <person name="Brault B."/>
            <person name="Chen Z."/>
            <person name="Choquer M."/>
            <person name="Collemare J."/>
            <person name="Cotton P."/>
            <person name="Danchin E.G."/>
            <person name="Da Silva C."/>
            <person name="Gautier A."/>
            <person name="Giraud C."/>
            <person name="Giraud T."/>
            <person name="Gonzalez C."/>
            <person name="Grossetete S."/>
            <person name="Gueldener U."/>
            <person name="Henrissat B."/>
            <person name="Howlett B.J."/>
            <person name="Kodira C."/>
            <person name="Kretschmer M."/>
            <person name="Lappartient A."/>
            <person name="Leroch M."/>
            <person name="Levis C."/>
            <person name="Mauceli E."/>
            <person name="Neuveglise C."/>
            <person name="Oeser B."/>
            <person name="Pearson M."/>
            <person name="Poulain J."/>
            <person name="Poussereau N."/>
            <person name="Quesneville H."/>
            <person name="Rascle C."/>
            <person name="Schumacher J."/>
            <person name="Segurens B."/>
            <person name="Sexton A."/>
            <person name="Silva E."/>
            <person name="Sirven C."/>
            <person name="Soanes D.M."/>
            <person name="Talbot N.J."/>
            <person name="Templeton M."/>
            <person name="Yandava C."/>
            <person name="Yarden O."/>
            <person name="Zeng Q."/>
            <person name="Rollins J.A."/>
            <person name="Lebrun M.-H."/>
            <person name="Dickman M."/>
        </authorList>
    </citation>
    <scope>NUCLEOTIDE SEQUENCE [LARGE SCALE GENOMIC DNA]</scope>
    <source>
        <strain>B05.10</strain>
    </source>
</reference>
<reference key="2">
    <citation type="journal article" date="2012" name="Eukaryot. Cell">
        <title>Genome update of Botrytis cinerea strains B05.10 and T4.</title>
        <authorList>
            <person name="Staats M."/>
            <person name="van Kan J.A.L."/>
        </authorList>
    </citation>
    <scope>NUCLEOTIDE SEQUENCE [LARGE SCALE GENOMIC DNA]</scope>
    <scope>GENOME REANNOTATION</scope>
    <source>
        <strain>B05.10</strain>
    </source>
</reference>
<reference key="3">
    <citation type="journal article" date="2017" name="Mol. Plant Pathol.">
        <title>A gapless genome sequence of the fungus Botrytis cinerea.</title>
        <authorList>
            <person name="van Kan J.A.L."/>
            <person name="Stassen J.H.M."/>
            <person name="Mosbach A."/>
            <person name="van der Lee T.A.J."/>
            <person name="Faino L."/>
            <person name="Farmer A.D."/>
            <person name="Papasotiriou D.G."/>
            <person name="Zhou S."/>
            <person name="Seidl M.F."/>
            <person name="Cottam E."/>
            <person name="Edel D."/>
            <person name="Hahn M."/>
            <person name="Schwartz D.C."/>
            <person name="Dietrich R.A."/>
            <person name="Widdison S."/>
            <person name="Scalliet G."/>
        </authorList>
    </citation>
    <scope>NUCLEOTIDE SEQUENCE [LARGE SCALE GENOMIC DNA]</scope>
    <scope>GENOME REANNOTATION</scope>
    <source>
        <strain>B05.10</strain>
    </source>
</reference>
<dbReference type="EMBL" id="CP009808">
    <property type="protein sequence ID" value="ATZ49116.1"/>
    <property type="molecule type" value="Genomic_DNA"/>
</dbReference>
<dbReference type="SMR" id="A6RUL1"/>
<dbReference type="EnsemblFungi" id="Bcin04g03030.1">
    <property type="protein sequence ID" value="Bcin04p03030.1"/>
    <property type="gene ID" value="Bcin04g03030"/>
</dbReference>
<dbReference type="GeneID" id="5437776"/>
<dbReference type="KEGG" id="bfu:BCIN_04g03030"/>
<dbReference type="VEuPathDB" id="FungiDB:Bcin04g03030"/>
<dbReference type="OMA" id="VWFSHNG"/>
<dbReference type="OrthoDB" id="24966at2759"/>
<dbReference type="Proteomes" id="UP000001798">
    <property type="component" value="Chromosome bcin04"/>
</dbReference>
<dbReference type="GO" id="GO:0016282">
    <property type="term" value="C:eukaryotic 43S preinitiation complex"/>
    <property type="evidence" value="ECO:0007669"/>
    <property type="project" value="UniProtKB-UniRule"/>
</dbReference>
<dbReference type="GO" id="GO:0033290">
    <property type="term" value="C:eukaryotic 48S preinitiation complex"/>
    <property type="evidence" value="ECO:0007669"/>
    <property type="project" value="UniProtKB-UniRule"/>
</dbReference>
<dbReference type="GO" id="GO:0071540">
    <property type="term" value="C:eukaryotic translation initiation factor 3 complex, eIF3e"/>
    <property type="evidence" value="ECO:0007669"/>
    <property type="project" value="EnsemblFungi"/>
</dbReference>
<dbReference type="GO" id="GO:0071541">
    <property type="term" value="C:eukaryotic translation initiation factor 3 complex, eIF3m"/>
    <property type="evidence" value="ECO:0007669"/>
    <property type="project" value="EnsemblFungi"/>
</dbReference>
<dbReference type="GO" id="GO:0034399">
    <property type="term" value="C:nuclear periphery"/>
    <property type="evidence" value="ECO:0007669"/>
    <property type="project" value="EnsemblFungi"/>
</dbReference>
<dbReference type="GO" id="GO:0003723">
    <property type="term" value="F:RNA binding"/>
    <property type="evidence" value="ECO:0007669"/>
    <property type="project" value="TreeGrafter"/>
</dbReference>
<dbReference type="GO" id="GO:0003743">
    <property type="term" value="F:translation initiation factor activity"/>
    <property type="evidence" value="ECO:0007669"/>
    <property type="project" value="UniProtKB-UniRule"/>
</dbReference>
<dbReference type="GO" id="GO:0001732">
    <property type="term" value="P:formation of cytoplasmic translation initiation complex"/>
    <property type="evidence" value="ECO:0007669"/>
    <property type="project" value="UniProtKB-UniRule"/>
</dbReference>
<dbReference type="FunFam" id="2.130.10.10:FF:000127">
    <property type="entry name" value="Eukaryotic translation initiation factor 3 subunit I"/>
    <property type="match status" value="1"/>
</dbReference>
<dbReference type="Gene3D" id="2.130.10.10">
    <property type="entry name" value="YVTN repeat-like/Quinoprotein amine dehydrogenase"/>
    <property type="match status" value="1"/>
</dbReference>
<dbReference type="HAMAP" id="MF_03008">
    <property type="entry name" value="eIF3i"/>
    <property type="match status" value="1"/>
</dbReference>
<dbReference type="InterPro" id="IPR027525">
    <property type="entry name" value="eIF3i"/>
</dbReference>
<dbReference type="InterPro" id="IPR015943">
    <property type="entry name" value="WD40/YVTN_repeat-like_dom_sf"/>
</dbReference>
<dbReference type="InterPro" id="IPR019775">
    <property type="entry name" value="WD40_repeat_CS"/>
</dbReference>
<dbReference type="InterPro" id="IPR036322">
    <property type="entry name" value="WD40_repeat_dom_sf"/>
</dbReference>
<dbReference type="InterPro" id="IPR001680">
    <property type="entry name" value="WD40_rpt"/>
</dbReference>
<dbReference type="PANTHER" id="PTHR19877">
    <property type="entry name" value="EUKARYOTIC TRANSLATION INITIATION FACTOR 3 SUBUNIT I"/>
    <property type="match status" value="1"/>
</dbReference>
<dbReference type="PANTHER" id="PTHR19877:SF1">
    <property type="entry name" value="EUKARYOTIC TRANSLATION INITIATION FACTOR 3 SUBUNIT I"/>
    <property type="match status" value="1"/>
</dbReference>
<dbReference type="Pfam" id="PF24805">
    <property type="entry name" value="EIF3I"/>
    <property type="match status" value="1"/>
</dbReference>
<dbReference type="SMART" id="SM00320">
    <property type="entry name" value="WD40"/>
    <property type="match status" value="6"/>
</dbReference>
<dbReference type="SUPFAM" id="SSF50978">
    <property type="entry name" value="WD40 repeat-like"/>
    <property type="match status" value="1"/>
</dbReference>
<dbReference type="PROSITE" id="PS00678">
    <property type="entry name" value="WD_REPEATS_1"/>
    <property type="match status" value="1"/>
</dbReference>
<dbReference type="PROSITE" id="PS50082">
    <property type="entry name" value="WD_REPEATS_2"/>
    <property type="match status" value="3"/>
</dbReference>
<dbReference type="PROSITE" id="PS50294">
    <property type="entry name" value="WD_REPEATS_REGION"/>
    <property type="match status" value="2"/>
</dbReference>
<proteinExistence type="inferred from homology"/>
<organism>
    <name type="scientific">Botryotinia fuckeliana (strain B05.10)</name>
    <name type="common">Noble rot fungus</name>
    <name type="synonym">Botrytis cinerea</name>
    <dbReference type="NCBI Taxonomy" id="332648"/>
    <lineage>
        <taxon>Eukaryota</taxon>
        <taxon>Fungi</taxon>
        <taxon>Dikarya</taxon>
        <taxon>Ascomycota</taxon>
        <taxon>Pezizomycotina</taxon>
        <taxon>Leotiomycetes</taxon>
        <taxon>Helotiales</taxon>
        <taxon>Sclerotiniaceae</taxon>
        <taxon>Botrytis</taxon>
    </lineage>
</organism>
<comment type="function">
    <text evidence="1">Component of the eukaryotic translation initiation factor 3 (eIF-3) complex, which is involved in protein synthesis of a specialized repertoire of mRNAs and, together with other initiation factors, stimulates binding of mRNA and methionyl-tRNAi to the 40S ribosome. The eIF-3 complex specifically targets and initiates translation of a subset of mRNAs involved in cell proliferation.</text>
</comment>
<comment type="subunit">
    <text evidence="1">Component of the eukaryotic translation initiation factor 3 (eIF-3) complex.</text>
</comment>
<comment type="subcellular location">
    <subcellularLocation>
        <location evidence="1">Cytoplasm</location>
    </subcellularLocation>
</comment>
<comment type="similarity">
    <text evidence="1">Belongs to the eIF-3 subunit I family.</text>
</comment>
<keyword id="KW-0963">Cytoplasm</keyword>
<keyword id="KW-0396">Initiation factor</keyword>
<keyword id="KW-0648">Protein biosynthesis</keyword>
<keyword id="KW-1185">Reference proteome</keyword>
<keyword id="KW-0677">Repeat</keyword>
<keyword id="KW-0853">WD repeat</keyword>
<gene>
    <name type="primary">tif34</name>
    <name type="ORF">BC1G_04452</name>
    <name type="ORF">BCIN_04g03030</name>
</gene>
<sequence>MRPILLQGHERALTQIRYNRDGDIIFSTAKDQHICAWYAHNGERLGTYHGHQGAIWTVDVDPTTTIIASGAADNTVRLWDVKTGKCLKTWDFNTAVKRVEFNEDATQLLAVTEQRMGFLGTIVVLDINLDVNGPQSDDRALTITCAESKATVAGWSYMSKYIIAGHEDGSVSQYDAKTGELLFNTQVHEPDLQVTDLQWSPDRTYFITASKDKTAKLVNARDLEVMKTYVTDTPLNSASITPKKDFVILGGGQAAMDVTTTSARQGKFEARFYHKIFEEEIGRVRGHFGPLNTVAVDPNGKGYASGGEDGYVRVHQFDKGYFDFTYEVERQARQQ</sequence>
<evidence type="ECO:0000255" key="1">
    <source>
        <dbReference type="HAMAP-Rule" id="MF_03008"/>
    </source>
</evidence>
<feature type="chain" id="PRO_0000366900" description="Eukaryotic translation initiation factor 3 subunit I">
    <location>
        <begin position="1"/>
        <end position="335"/>
    </location>
</feature>
<feature type="repeat" description="WD 1">
    <location>
        <begin position="8"/>
        <end position="47"/>
    </location>
</feature>
<feature type="repeat" description="WD 2">
    <location>
        <begin position="50"/>
        <end position="91"/>
    </location>
</feature>
<feature type="repeat" description="WD 3">
    <location>
        <begin position="145"/>
        <end position="184"/>
    </location>
</feature>
<feature type="repeat" description="WD 4">
    <location>
        <begin position="189"/>
        <end position="228"/>
    </location>
</feature>
<feature type="repeat" description="WD 5">
    <location>
        <begin position="286"/>
        <end position="325"/>
    </location>
</feature>